<feature type="chain" id="PRO_1000013789" description="tRNA uridine(34) hydroxylase">
    <location>
        <begin position="1"/>
        <end position="327"/>
    </location>
</feature>
<feature type="domain" description="Rhodanese" evidence="1">
    <location>
        <begin position="130"/>
        <end position="224"/>
    </location>
</feature>
<feature type="active site" description="Cysteine persulfide intermediate" evidence="1">
    <location>
        <position position="184"/>
    </location>
</feature>
<reference key="1">
    <citation type="journal article" date="2007" name="PLoS ONE">
        <title>A glimpse of streptococcal toxic shock syndrome from comparative genomics of S. suis 2 Chinese isolates.</title>
        <authorList>
            <person name="Chen C."/>
            <person name="Tang J."/>
            <person name="Dong W."/>
            <person name="Wang C."/>
            <person name="Feng Y."/>
            <person name="Wang J."/>
            <person name="Zheng F."/>
            <person name="Pan X."/>
            <person name="Liu D."/>
            <person name="Li M."/>
            <person name="Song Y."/>
            <person name="Zhu X."/>
            <person name="Sun H."/>
            <person name="Feng T."/>
            <person name="Guo Z."/>
            <person name="Ju A."/>
            <person name="Ge J."/>
            <person name="Dong Y."/>
            <person name="Sun W."/>
            <person name="Jiang Y."/>
            <person name="Wang J."/>
            <person name="Yan J."/>
            <person name="Yang H."/>
            <person name="Wang X."/>
            <person name="Gao G.F."/>
            <person name="Yang R."/>
            <person name="Wang J."/>
            <person name="Yu J."/>
        </authorList>
    </citation>
    <scope>NUCLEOTIDE SEQUENCE [LARGE SCALE GENOMIC DNA]</scope>
    <source>
        <strain>98HAH33</strain>
    </source>
</reference>
<evidence type="ECO:0000255" key="1">
    <source>
        <dbReference type="HAMAP-Rule" id="MF_00469"/>
    </source>
</evidence>
<sequence length="327" mass="37924">MSKDIRVLLYYKYVPIENAKEYAAEHLAFCKSIGLKGRILIADEGINGTVSGDYETTQKYMDYVHANPLFSDLWFKIDEENEQAFKKMFVRYKKEIVHLGLEDNDFDNDIDPLVTTGAYLSPKEFKEALLDEDTVVLDTRNDYEYDLGHFRGAIRPDIRNFRELPQWVRDNKEKFMDKRVVVYCTGGVRCEKFSGWMVREGYKDVGQLHGGIATYGKDPEVRGELWDGKMYVFDERIAVDVNHVNPVVVGKDWFDGTPCERYVNCGNPFCNRRILTSEENEHKYVRGCSAECRAHERNRYISENGLTRQEWAERLEAIGETLTPANA</sequence>
<comment type="function">
    <text evidence="1">Catalyzes oxygen-dependent 5-hydroxyuridine (ho5U) modification at position 34 in tRNAs.</text>
</comment>
<comment type="catalytic activity">
    <reaction evidence="1">
        <text>uridine(34) in tRNA + AH2 + O2 = 5-hydroxyuridine(34) in tRNA + A + H2O</text>
        <dbReference type="Rhea" id="RHEA:64224"/>
        <dbReference type="Rhea" id="RHEA-COMP:11727"/>
        <dbReference type="Rhea" id="RHEA-COMP:13381"/>
        <dbReference type="ChEBI" id="CHEBI:13193"/>
        <dbReference type="ChEBI" id="CHEBI:15377"/>
        <dbReference type="ChEBI" id="CHEBI:15379"/>
        <dbReference type="ChEBI" id="CHEBI:17499"/>
        <dbReference type="ChEBI" id="CHEBI:65315"/>
        <dbReference type="ChEBI" id="CHEBI:136877"/>
    </reaction>
</comment>
<comment type="similarity">
    <text evidence="1">Belongs to the TrhO family.</text>
</comment>
<proteinExistence type="inferred from homology"/>
<protein>
    <recommendedName>
        <fullName evidence="1">tRNA uridine(34) hydroxylase</fullName>
        <ecNumber evidence="1">1.14.-.-</ecNumber>
    </recommendedName>
    <alternativeName>
        <fullName evidence="1">tRNA hydroxylation protein O</fullName>
    </alternativeName>
</protein>
<keyword id="KW-0560">Oxidoreductase</keyword>
<keyword id="KW-0819">tRNA processing</keyword>
<dbReference type="EC" id="1.14.-.-" evidence="1"/>
<dbReference type="EMBL" id="CP000408">
    <property type="protein sequence ID" value="ABP91550.1"/>
    <property type="molecule type" value="Genomic_DNA"/>
</dbReference>
<dbReference type="SMR" id="A4VZL1"/>
<dbReference type="KEGG" id="ssv:SSU98_0392"/>
<dbReference type="HOGENOM" id="CLU_038878_1_0_9"/>
<dbReference type="BioCyc" id="SSUI391296:GI2E-430-MONOMER"/>
<dbReference type="GO" id="GO:0016705">
    <property type="term" value="F:oxidoreductase activity, acting on paired donors, with incorporation or reduction of molecular oxygen"/>
    <property type="evidence" value="ECO:0007669"/>
    <property type="project" value="UniProtKB-UniRule"/>
</dbReference>
<dbReference type="GO" id="GO:0006400">
    <property type="term" value="P:tRNA modification"/>
    <property type="evidence" value="ECO:0007669"/>
    <property type="project" value="UniProtKB-UniRule"/>
</dbReference>
<dbReference type="CDD" id="cd01518">
    <property type="entry name" value="RHOD_YceA"/>
    <property type="match status" value="1"/>
</dbReference>
<dbReference type="Gene3D" id="3.30.70.100">
    <property type="match status" value="1"/>
</dbReference>
<dbReference type="Gene3D" id="3.40.250.10">
    <property type="entry name" value="Rhodanese-like domain"/>
    <property type="match status" value="1"/>
</dbReference>
<dbReference type="HAMAP" id="MF_00469">
    <property type="entry name" value="TrhO"/>
    <property type="match status" value="1"/>
</dbReference>
<dbReference type="InterPro" id="IPR001763">
    <property type="entry name" value="Rhodanese-like_dom"/>
</dbReference>
<dbReference type="InterPro" id="IPR036873">
    <property type="entry name" value="Rhodanese-like_dom_sf"/>
</dbReference>
<dbReference type="InterPro" id="IPR022111">
    <property type="entry name" value="Rhodanese_C"/>
</dbReference>
<dbReference type="InterPro" id="IPR020936">
    <property type="entry name" value="TrhO"/>
</dbReference>
<dbReference type="InterPro" id="IPR040503">
    <property type="entry name" value="TRHO_N"/>
</dbReference>
<dbReference type="NCBIfam" id="NF001135">
    <property type="entry name" value="PRK00142.1-3"/>
    <property type="match status" value="1"/>
</dbReference>
<dbReference type="NCBIfam" id="NF001137">
    <property type="entry name" value="PRK00142.1-5"/>
    <property type="match status" value="1"/>
</dbReference>
<dbReference type="PANTHER" id="PTHR43268:SF3">
    <property type="entry name" value="RHODANESE-LIKE DOMAIN-CONTAINING PROTEIN 7-RELATED"/>
    <property type="match status" value="1"/>
</dbReference>
<dbReference type="PANTHER" id="PTHR43268">
    <property type="entry name" value="THIOSULFATE SULFURTRANSFERASE/RHODANESE-LIKE DOMAIN-CONTAINING PROTEIN 2"/>
    <property type="match status" value="1"/>
</dbReference>
<dbReference type="Pfam" id="PF00581">
    <property type="entry name" value="Rhodanese"/>
    <property type="match status" value="1"/>
</dbReference>
<dbReference type="Pfam" id="PF12368">
    <property type="entry name" value="Rhodanese_C"/>
    <property type="match status" value="1"/>
</dbReference>
<dbReference type="Pfam" id="PF17773">
    <property type="entry name" value="UPF0176_N"/>
    <property type="match status" value="1"/>
</dbReference>
<dbReference type="SMART" id="SM00450">
    <property type="entry name" value="RHOD"/>
    <property type="match status" value="1"/>
</dbReference>
<dbReference type="SUPFAM" id="SSF52821">
    <property type="entry name" value="Rhodanese/Cell cycle control phosphatase"/>
    <property type="match status" value="1"/>
</dbReference>
<dbReference type="PROSITE" id="PS50206">
    <property type="entry name" value="RHODANESE_3"/>
    <property type="match status" value="1"/>
</dbReference>
<name>TRHO_STRS2</name>
<gene>
    <name evidence="1" type="primary">trhO</name>
    <name type="ordered locus">SSU98_0392</name>
</gene>
<accession>A4VZL1</accession>
<organism>
    <name type="scientific">Streptococcus suis (strain 98HAH33)</name>
    <dbReference type="NCBI Taxonomy" id="391296"/>
    <lineage>
        <taxon>Bacteria</taxon>
        <taxon>Bacillati</taxon>
        <taxon>Bacillota</taxon>
        <taxon>Bacilli</taxon>
        <taxon>Lactobacillales</taxon>
        <taxon>Streptococcaceae</taxon>
        <taxon>Streptococcus</taxon>
    </lineage>
</organism>